<protein>
    <recommendedName>
        <fullName evidence="1">Fluoride-specific ion channel FluC</fullName>
    </recommendedName>
</protein>
<dbReference type="EMBL" id="AP009179">
    <property type="protein sequence ID" value="BAF72232.1"/>
    <property type="molecule type" value="Genomic_DNA"/>
</dbReference>
<dbReference type="RefSeq" id="WP_011980965.1">
    <property type="nucleotide sequence ID" value="NC_009663.1"/>
</dbReference>
<dbReference type="SMR" id="A6Q9S3"/>
<dbReference type="STRING" id="387093.SUN_1279"/>
<dbReference type="KEGG" id="sun:SUN_1279"/>
<dbReference type="eggNOG" id="COG0239">
    <property type="taxonomic scope" value="Bacteria"/>
</dbReference>
<dbReference type="HOGENOM" id="CLU_114342_3_0_7"/>
<dbReference type="OrthoDB" id="9806299at2"/>
<dbReference type="Proteomes" id="UP000006378">
    <property type="component" value="Chromosome"/>
</dbReference>
<dbReference type="GO" id="GO:0005886">
    <property type="term" value="C:plasma membrane"/>
    <property type="evidence" value="ECO:0007669"/>
    <property type="project" value="UniProtKB-SubCell"/>
</dbReference>
<dbReference type="GO" id="GO:0062054">
    <property type="term" value="F:fluoride channel activity"/>
    <property type="evidence" value="ECO:0007669"/>
    <property type="project" value="UniProtKB-UniRule"/>
</dbReference>
<dbReference type="GO" id="GO:0046872">
    <property type="term" value="F:metal ion binding"/>
    <property type="evidence" value="ECO:0007669"/>
    <property type="project" value="UniProtKB-KW"/>
</dbReference>
<dbReference type="GO" id="GO:0140114">
    <property type="term" value="P:cellular detoxification of fluoride"/>
    <property type="evidence" value="ECO:0007669"/>
    <property type="project" value="UniProtKB-UniRule"/>
</dbReference>
<dbReference type="HAMAP" id="MF_00454">
    <property type="entry name" value="FluC"/>
    <property type="match status" value="1"/>
</dbReference>
<dbReference type="InterPro" id="IPR003691">
    <property type="entry name" value="FluC"/>
</dbReference>
<dbReference type="NCBIfam" id="TIGR00494">
    <property type="entry name" value="crcB"/>
    <property type="match status" value="1"/>
</dbReference>
<dbReference type="PANTHER" id="PTHR28259">
    <property type="entry name" value="FLUORIDE EXPORT PROTEIN 1-RELATED"/>
    <property type="match status" value="1"/>
</dbReference>
<dbReference type="PANTHER" id="PTHR28259:SF1">
    <property type="entry name" value="FLUORIDE EXPORT PROTEIN 1-RELATED"/>
    <property type="match status" value="1"/>
</dbReference>
<dbReference type="Pfam" id="PF02537">
    <property type="entry name" value="CRCB"/>
    <property type="match status" value="1"/>
</dbReference>
<accession>A6Q9S3</accession>
<feature type="chain" id="PRO_1000026424" description="Fluoride-specific ion channel FluC">
    <location>
        <begin position="1"/>
        <end position="126"/>
    </location>
</feature>
<feature type="transmembrane region" description="Helical" evidence="1">
    <location>
        <begin position="3"/>
        <end position="23"/>
    </location>
</feature>
<feature type="transmembrane region" description="Helical" evidence="1">
    <location>
        <begin position="37"/>
        <end position="57"/>
    </location>
</feature>
<feature type="transmembrane region" description="Helical" evidence="1">
    <location>
        <begin position="68"/>
        <end position="88"/>
    </location>
</feature>
<feature type="transmembrane region" description="Helical" evidence="1">
    <location>
        <begin position="101"/>
        <end position="121"/>
    </location>
</feature>
<feature type="binding site" evidence="1">
    <location>
        <position position="75"/>
    </location>
    <ligand>
        <name>Na(+)</name>
        <dbReference type="ChEBI" id="CHEBI:29101"/>
        <note>structural</note>
    </ligand>
</feature>
<feature type="binding site" evidence="1">
    <location>
        <position position="78"/>
    </location>
    <ligand>
        <name>Na(+)</name>
        <dbReference type="ChEBI" id="CHEBI:29101"/>
        <note>structural</note>
    </ligand>
</feature>
<proteinExistence type="inferred from homology"/>
<comment type="function">
    <text evidence="1">Fluoride-specific ion channel. Important for reducing fluoride concentration in the cell, thus reducing its toxicity.</text>
</comment>
<comment type="catalytic activity">
    <reaction evidence="1">
        <text>fluoride(in) = fluoride(out)</text>
        <dbReference type="Rhea" id="RHEA:76159"/>
        <dbReference type="ChEBI" id="CHEBI:17051"/>
    </reaction>
    <physiologicalReaction direction="left-to-right" evidence="1">
        <dbReference type="Rhea" id="RHEA:76160"/>
    </physiologicalReaction>
</comment>
<comment type="activity regulation">
    <text evidence="1">Na(+) is not transported, but it plays an essential structural role and its presence is essential for fluoride channel function.</text>
</comment>
<comment type="subcellular location">
    <subcellularLocation>
        <location evidence="1">Cell inner membrane</location>
        <topology evidence="1">Multi-pass membrane protein</topology>
    </subcellularLocation>
</comment>
<comment type="similarity">
    <text evidence="1">Belongs to the fluoride channel Fluc/FEX (TC 1.A.43) family.</text>
</comment>
<keyword id="KW-0997">Cell inner membrane</keyword>
<keyword id="KW-1003">Cell membrane</keyword>
<keyword id="KW-0407">Ion channel</keyword>
<keyword id="KW-0406">Ion transport</keyword>
<keyword id="KW-0472">Membrane</keyword>
<keyword id="KW-0479">Metal-binding</keyword>
<keyword id="KW-0915">Sodium</keyword>
<keyword id="KW-0812">Transmembrane</keyword>
<keyword id="KW-1133">Transmembrane helix</keyword>
<keyword id="KW-0813">Transport</keyword>
<name>FLUC_SULNB</name>
<organism>
    <name type="scientific">Sulfurovum sp. (strain NBC37-1)</name>
    <dbReference type="NCBI Taxonomy" id="387093"/>
    <lineage>
        <taxon>Bacteria</taxon>
        <taxon>Pseudomonadati</taxon>
        <taxon>Campylobacterota</taxon>
        <taxon>Epsilonproteobacteria</taxon>
        <taxon>Campylobacterales</taxon>
        <taxon>Sulfurovaceae</taxon>
        <taxon>Sulfurovum</taxon>
    </lineage>
</organism>
<sequence length="126" mass="13593">MQPYLLLAVGTGGFVGAILRFLISGWVQRLSPTLFPVGTLSVNVLGSFIIGFLALYFESVVAPHQKALVITGMLGALTTFSTFSLETVTMLQGGLWGRVVTNITLNVFLCVVATMLGMMLFKRLYG</sequence>
<gene>
    <name evidence="1" type="primary">fluC</name>
    <name evidence="1" type="synonym">crcB</name>
    <name type="ordered locus">SUN_1279</name>
</gene>
<evidence type="ECO:0000255" key="1">
    <source>
        <dbReference type="HAMAP-Rule" id="MF_00454"/>
    </source>
</evidence>
<reference key="1">
    <citation type="journal article" date="2007" name="Proc. Natl. Acad. Sci. U.S.A.">
        <title>Deep-sea vent epsilon-proteobacterial genomes provide insights into emergence of pathogens.</title>
        <authorList>
            <person name="Nakagawa S."/>
            <person name="Takaki Y."/>
            <person name="Shimamura S."/>
            <person name="Reysenbach A.-L."/>
            <person name="Takai K."/>
            <person name="Horikoshi K."/>
        </authorList>
    </citation>
    <scope>NUCLEOTIDE SEQUENCE [LARGE SCALE GENOMIC DNA]</scope>
    <source>
        <strain>NBC37-1</strain>
    </source>
</reference>